<sequence>MSQFSCVGLIGRLDSDNAAYSLRRLISFLAKQNIEVMLDEETAEFYTENELEIVSRETLAKRCDLIIVVGGDGSLLSAARAFAGKPVKLLGINRGRLGFLTDISPDEIEYKVGEVLAGKYVSESRFLLHSQLYRGEELISEAVALNDVVMHPGQFIRMIEFELYINDEFVYRQRSDGLIISSPTGATAYALSCGGPIMHPSLDAIVLVPMNPHTLSSRPIVVHGSSRIRLLIAKDNHLSPHITNDGQTHVVTKPGDEVVVTKSPDLLELIHPTDHNFYETCRSKLGWASHTGGC</sequence>
<comment type="function">
    <text evidence="1">Involved in the regulation of the intracellular balance of NAD and NADP, and is a key enzyme in the biosynthesis of NADP. Catalyzes specifically the phosphorylation on 2'-hydroxyl of the adenosine moiety of NAD to yield NADP.</text>
</comment>
<comment type="catalytic activity">
    <reaction evidence="1">
        <text>NAD(+) + ATP = ADP + NADP(+) + H(+)</text>
        <dbReference type="Rhea" id="RHEA:18629"/>
        <dbReference type="ChEBI" id="CHEBI:15378"/>
        <dbReference type="ChEBI" id="CHEBI:30616"/>
        <dbReference type="ChEBI" id="CHEBI:57540"/>
        <dbReference type="ChEBI" id="CHEBI:58349"/>
        <dbReference type="ChEBI" id="CHEBI:456216"/>
        <dbReference type="EC" id="2.7.1.23"/>
    </reaction>
</comment>
<comment type="cofactor">
    <cofactor evidence="1">
        <name>a divalent metal cation</name>
        <dbReference type="ChEBI" id="CHEBI:60240"/>
    </cofactor>
</comment>
<comment type="subcellular location">
    <subcellularLocation>
        <location evidence="1">Cytoplasm</location>
    </subcellularLocation>
</comment>
<comment type="similarity">
    <text evidence="1">Belongs to the NAD kinase family.</text>
</comment>
<proteinExistence type="inferred from homology"/>
<keyword id="KW-0067">ATP-binding</keyword>
<keyword id="KW-0963">Cytoplasm</keyword>
<keyword id="KW-0418">Kinase</keyword>
<keyword id="KW-0520">NAD</keyword>
<keyword id="KW-0521">NADP</keyword>
<keyword id="KW-0547">Nucleotide-binding</keyword>
<keyword id="KW-1185">Reference proteome</keyword>
<keyword id="KW-0808">Transferase</keyword>
<organism>
    <name type="scientific">Saccharophagus degradans (strain 2-40 / ATCC 43961 / DSM 17024)</name>
    <dbReference type="NCBI Taxonomy" id="203122"/>
    <lineage>
        <taxon>Bacteria</taxon>
        <taxon>Pseudomonadati</taxon>
        <taxon>Pseudomonadota</taxon>
        <taxon>Gammaproteobacteria</taxon>
        <taxon>Cellvibrionales</taxon>
        <taxon>Cellvibrionaceae</taxon>
        <taxon>Saccharophagus</taxon>
    </lineage>
</organism>
<gene>
    <name evidence="1" type="primary">nadK</name>
    <name type="ordered locus">Sde_1733</name>
</gene>
<dbReference type="EC" id="2.7.1.23" evidence="1"/>
<dbReference type="EMBL" id="CP000282">
    <property type="protein sequence ID" value="ABD80993.1"/>
    <property type="molecule type" value="Genomic_DNA"/>
</dbReference>
<dbReference type="RefSeq" id="WP_011468213.1">
    <property type="nucleotide sequence ID" value="NC_007912.1"/>
</dbReference>
<dbReference type="SMR" id="Q21JY6"/>
<dbReference type="STRING" id="203122.Sde_1733"/>
<dbReference type="GeneID" id="98613408"/>
<dbReference type="KEGG" id="sde:Sde_1733"/>
<dbReference type="eggNOG" id="COG0061">
    <property type="taxonomic scope" value="Bacteria"/>
</dbReference>
<dbReference type="HOGENOM" id="CLU_008831_0_1_6"/>
<dbReference type="OrthoDB" id="9774737at2"/>
<dbReference type="Proteomes" id="UP000001947">
    <property type="component" value="Chromosome"/>
</dbReference>
<dbReference type="GO" id="GO:0005737">
    <property type="term" value="C:cytoplasm"/>
    <property type="evidence" value="ECO:0007669"/>
    <property type="project" value="UniProtKB-SubCell"/>
</dbReference>
<dbReference type="GO" id="GO:0005524">
    <property type="term" value="F:ATP binding"/>
    <property type="evidence" value="ECO:0007669"/>
    <property type="project" value="UniProtKB-KW"/>
</dbReference>
<dbReference type="GO" id="GO:0046872">
    <property type="term" value="F:metal ion binding"/>
    <property type="evidence" value="ECO:0007669"/>
    <property type="project" value="UniProtKB-UniRule"/>
</dbReference>
<dbReference type="GO" id="GO:0051287">
    <property type="term" value="F:NAD binding"/>
    <property type="evidence" value="ECO:0007669"/>
    <property type="project" value="UniProtKB-ARBA"/>
</dbReference>
<dbReference type="GO" id="GO:0003951">
    <property type="term" value="F:NAD+ kinase activity"/>
    <property type="evidence" value="ECO:0007669"/>
    <property type="project" value="UniProtKB-UniRule"/>
</dbReference>
<dbReference type="GO" id="GO:0019674">
    <property type="term" value="P:NAD metabolic process"/>
    <property type="evidence" value="ECO:0007669"/>
    <property type="project" value="InterPro"/>
</dbReference>
<dbReference type="GO" id="GO:0006741">
    <property type="term" value="P:NADP biosynthetic process"/>
    <property type="evidence" value="ECO:0007669"/>
    <property type="project" value="UniProtKB-UniRule"/>
</dbReference>
<dbReference type="Gene3D" id="3.40.50.10330">
    <property type="entry name" value="Probable inorganic polyphosphate/atp-NAD kinase, domain 1"/>
    <property type="match status" value="1"/>
</dbReference>
<dbReference type="Gene3D" id="2.60.200.30">
    <property type="entry name" value="Probable inorganic polyphosphate/atp-NAD kinase, domain 2"/>
    <property type="match status" value="1"/>
</dbReference>
<dbReference type="HAMAP" id="MF_00361">
    <property type="entry name" value="NAD_kinase"/>
    <property type="match status" value="1"/>
</dbReference>
<dbReference type="InterPro" id="IPR017438">
    <property type="entry name" value="ATP-NAD_kinase_N"/>
</dbReference>
<dbReference type="InterPro" id="IPR017437">
    <property type="entry name" value="ATP-NAD_kinase_PpnK-typ_C"/>
</dbReference>
<dbReference type="InterPro" id="IPR016064">
    <property type="entry name" value="NAD/diacylglycerol_kinase_sf"/>
</dbReference>
<dbReference type="InterPro" id="IPR002504">
    <property type="entry name" value="NADK"/>
</dbReference>
<dbReference type="NCBIfam" id="NF002306">
    <property type="entry name" value="PRK01231.1"/>
    <property type="match status" value="1"/>
</dbReference>
<dbReference type="PANTHER" id="PTHR20275">
    <property type="entry name" value="NAD KINASE"/>
    <property type="match status" value="1"/>
</dbReference>
<dbReference type="PANTHER" id="PTHR20275:SF0">
    <property type="entry name" value="NAD KINASE"/>
    <property type="match status" value="1"/>
</dbReference>
<dbReference type="Pfam" id="PF01513">
    <property type="entry name" value="NAD_kinase"/>
    <property type="match status" value="1"/>
</dbReference>
<dbReference type="Pfam" id="PF20143">
    <property type="entry name" value="NAD_kinase_C"/>
    <property type="match status" value="1"/>
</dbReference>
<dbReference type="SUPFAM" id="SSF111331">
    <property type="entry name" value="NAD kinase/diacylglycerol kinase-like"/>
    <property type="match status" value="1"/>
</dbReference>
<accession>Q21JY6</accession>
<evidence type="ECO:0000255" key="1">
    <source>
        <dbReference type="HAMAP-Rule" id="MF_00361"/>
    </source>
</evidence>
<reference key="1">
    <citation type="journal article" date="2008" name="PLoS Genet.">
        <title>Complete genome sequence of the complex carbohydrate-degrading marine bacterium, Saccharophagus degradans strain 2-40 T.</title>
        <authorList>
            <person name="Weiner R.M."/>
            <person name="Taylor L.E. II"/>
            <person name="Henrissat B."/>
            <person name="Hauser L."/>
            <person name="Land M."/>
            <person name="Coutinho P.M."/>
            <person name="Rancurel C."/>
            <person name="Saunders E.H."/>
            <person name="Longmire A.G."/>
            <person name="Zhang H."/>
            <person name="Bayer E.A."/>
            <person name="Gilbert H.J."/>
            <person name="Larimer F."/>
            <person name="Zhulin I.B."/>
            <person name="Ekborg N.A."/>
            <person name="Lamed R."/>
            <person name="Richardson P.M."/>
            <person name="Borovok I."/>
            <person name="Hutcheson S."/>
        </authorList>
    </citation>
    <scope>NUCLEOTIDE SEQUENCE [LARGE SCALE GENOMIC DNA]</scope>
    <source>
        <strain>2-40 / ATCC 43961 / DSM 17024</strain>
    </source>
</reference>
<protein>
    <recommendedName>
        <fullName evidence="1">NAD kinase</fullName>
        <ecNumber evidence="1">2.7.1.23</ecNumber>
    </recommendedName>
    <alternativeName>
        <fullName evidence="1">ATP-dependent NAD kinase</fullName>
    </alternativeName>
</protein>
<name>NADK_SACD2</name>
<feature type="chain" id="PRO_1000005442" description="NAD kinase">
    <location>
        <begin position="1"/>
        <end position="294"/>
    </location>
</feature>
<feature type="active site" description="Proton acceptor" evidence="1">
    <location>
        <position position="72"/>
    </location>
</feature>
<feature type="binding site" evidence="1">
    <location>
        <begin position="72"/>
        <end position="73"/>
    </location>
    <ligand>
        <name>NAD(+)</name>
        <dbReference type="ChEBI" id="CHEBI:57540"/>
    </ligand>
</feature>
<feature type="binding site" evidence="1">
    <location>
        <begin position="146"/>
        <end position="147"/>
    </location>
    <ligand>
        <name>NAD(+)</name>
        <dbReference type="ChEBI" id="CHEBI:57540"/>
    </ligand>
</feature>
<feature type="binding site" evidence="1">
    <location>
        <position position="157"/>
    </location>
    <ligand>
        <name>NAD(+)</name>
        <dbReference type="ChEBI" id="CHEBI:57540"/>
    </ligand>
</feature>
<feature type="binding site" evidence="1">
    <location>
        <position position="174"/>
    </location>
    <ligand>
        <name>NAD(+)</name>
        <dbReference type="ChEBI" id="CHEBI:57540"/>
    </ligand>
</feature>
<feature type="binding site" evidence="1">
    <location>
        <position position="176"/>
    </location>
    <ligand>
        <name>NAD(+)</name>
        <dbReference type="ChEBI" id="CHEBI:57540"/>
    </ligand>
</feature>
<feature type="binding site" evidence="1">
    <location>
        <begin position="187"/>
        <end position="192"/>
    </location>
    <ligand>
        <name>NAD(+)</name>
        <dbReference type="ChEBI" id="CHEBI:57540"/>
    </ligand>
</feature>
<feature type="binding site" evidence="1">
    <location>
        <position position="247"/>
    </location>
    <ligand>
        <name>NAD(+)</name>
        <dbReference type="ChEBI" id="CHEBI:57540"/>
    </ligand>
</feature>